<name>ILVD_PYRAB</name>
<comment type="function">
    <text evidence="1">Functions in the biosynthesis of branched-chain amino acids. Catalyzes the dehydration of (2R,3R)-2,3-dihydroxy-3-methylpentanoate (2,3-dihydroxy-3-methylvalerate) into 2-oxo-3-methylpentanoate (2-oxo-3-methylvalerate) and of (2R)-2,3-dihydroxy-3-methylbutanoate (2,3-dihydroxyisovalerate) into 2-oxo-3-methylbutanoate (2-oxoisovalerate), the penultimate precursor to L-isoleucine and L-valine, respectively.</text>
</comment>
<comment type="catalytic activity">
    <reaction evidence="1">
        <text>(2R)-2,3-dihydroxy-3-methylbutanoate = 3-methyl-2-oxobutanoate + H2O</text>
        <dbReference type="Rhea" id="RHEA:24809"/>
        <dbReference type="ChEBI" id="CHEBI:11851"/>
        <dbReference type="ChEBI" id="CHEBI:15377"/>
        <dbReference type="ChEBI" id="CHEBI:49072"/>
        <dbReference type="EC" id="4.2.1.9"/>
    </reaction>
    <physiologicalReaction direction="left-to-right" evidence="1">
        <dbReference type="Rhea" id="RHEA:24810"/>
    </physiologicalReaction>
</comment>
<comment type="catalytic activity">
    <reaction evidence="1">
        <text>(2R,3R)-2,3-dihydroxy-3-methylpentanoate = (S)-3-methyl-2-oxopentanoate + H2O</text>
        <dbReference type="Rhea" id="RHEA:27694"/>
        <dbReference type="ChEBI" id="CHEBI:15377"/>
        <dbReference type="ChEBI" id="CHEBI:35146"/>
        <dbReference type="ChEBI" id="CHEBI:49258"/>
        <dbReference type="EC" id="4.2.1.9"/>
    </reaction>
    <physiologicalReaction direction="left-to-right" evidence="1">
        <dbReference type="Rhea" id="RHEA:27695"/>
    </physiologicalReaction>
</comment>
<comment type="cofactor">
    <cofactor evidence="1">
        <name>[2Fe-2S] cluster</name>
        <dbReference type="ChEBI" id="CHEBI:190135"/>
    </cofactor>
    <text evidence="1">Binds 1 [2Fe-2S] cluster per subunit. This cluster acts as a Lewis acid cofactor.</text>
</comment>
<comment type="cofactor">
    <cofactor evidence="1">
        <name>Mg(2+)</name>
        <dbReference type="ChEBI" id="CHEBI:18420"/>
    </cofactor>
</comment>
<comment type="pathway">
    <text evidence="1">Amino-acid biosynthesis; L-isoleucine biosynthesis; L-isoleucine from 2-oxobutanoate: step 3/4.</text>
</comment>
<comment type="pathway">
    <text evidence="1">Amino-acid biosynthesis; L-valine biosynthesis; L-valine from pyruvate: step 3/4.</text>
</comment>
<comment type="subunit">
    <text evidence="1">Homodimer.</text>
</comment>
<comment type="similarity">
    <text evidence="1">Belongs to the IlvD/Edd family.</text>
</comment>
<protein>
    <recommendedName>
        <fullName evidence="1">Dihydroxy-acid dehydratase</fullName>
        <shortName evidence="1">DAD</shortName>
        <ecNumber evidence="1">4.2.1.9</ecNumber>
    </recommendedName>
</protein>
<dbReference type="EC" id="4.2.1.9" evidence="1"/>
<dbReference type="EMBL" id="AJ248287">
    <property type="protein sequence ID" value="CAB50259.1"/>
    <property type="molecule type" value="Genomic_DNA"/>
</dbReference>
<dbReference type="EMBL" id="HE613800">
    <property type="protein sequence ID" value="CCE70797.1"/>
    <property type="molecule type" value="Genomic_DNA"/>
</dbReference>
<dbReference type="PIR" id="F75045">
    <property type="entry name" value="F75045"/>
</dbReference>
<dbReference type="RefSeq" id="WP_010868469.1">
    <property type="nucleotide sequence ID" value="NC_000868.1"/>
</dbReference>
<dbReference type="SMR" id="Q9UZ03"/>
<dbReference type="STRING" id="272844.PAB0895"/>
<dbReference type="KEGG" id="pab:PAB0895"/>
<dbReference type="PATRIC" id="fig|272844.11.peg.1440"/>
<dbReference type="eggNOG" id="arCOG04045">
    <property type="taxonomic scope" value="Archaea"/>
</dbReference>
<dbReference type="HOGENOM" id="CLU_014271_4_2_2"/>
<dbReference type="OrthoDB" id="8674at2157"/>
<dbReference type="PhylomeDB" id="Q9UZ03"/>
<dbReference type="UniPathway" id="UPA00047">
    <property type="reaction ID" value="UER00057"/>
</dbReference>
<dbReference type="UniPathway" id="UPA00049">
    <property type="reaction ID" value="UER00061"/>
</dbReference>
<dbReference type="Proteomes" id="UP000000810">
    <property type="component" value="Chromosome"/>
</dbReference>
<dbReference type="Proteomes" id="UP000009139">
    <property type="component" value="Chromosome"/>
</dbReference>
<dbReference type="GO" id="GO:0005829">
    <property type="term" value="C:cytosol"/>
    <property type="evidence" value="ECO:0007669"/>
    <property type="project" value="TreeGrafter"/>
</dbReference>
<dbReference type="GO" id="GO:0051537">
    <property type="term" value="F:2 iron, 2 sulfur cluster binding"/>
    <property type="evidence" value="ECO:0007669"/>
    <property type="project" value="UniProtKB-UniRule"/>
</dbReference>
<dbReference type="GO" id="GO:0004160">
    <property type="term" value="F:dihydroxy-acid dehydratase activity"/>
    <property type="evidence" value="ECO:0007669"/>
    <property type="project" value="UniProtKB-UniRule"/>
</dbReference>
<dbReference type="GO" id="GO:0000287">
    <property type="term" value="F:magnesium ion binding"/>
    <property type="evidence" value="ECO:0007669"/>
    <property type="project" value="UniProtKB-UniRule"/>
</dbReference>
<dbReference type="GO" id="GO:0009097">
    <property type="term" value="P:isoleucine biosynthetic process"/>
    <property type="evidence" value="ECO:0007669"/>
    <property type="project" value="UniProtKB-UniRule"/>
</dbReference>
<dbReference type="GO" id="GO:0009099">
    <property type="term" value="P:L-valine biosynthetic process"/>
    <property type="evidence" value="ECO:0007669"/>
    <property type="project" value="UniProtKB-UniRule"/>
</dbReference>
<dbReference type="FunFam" id="3.50.30.80:FF:000001">
    <property type="entry name" value="Dihydroxy-acid dehydratase"/>
    <property type="match status" value="1"/>
</dbReference>
<dbReference type="Gene3D" id="3.50.30.80">
    <property type="entry name" value="IlvD/EDD C-terminal domain-like"/>
    <property type="match status" value="1"/>
</dbReference>
<dbReference type="HAMAP" id="MF_00012">
    <property type="entry name" value="IlvD"/>
    <property type="match status" value="1"/>
</dbReference>
<dbReference type="InterPro" id="IPR042096">
    <property type="entry name" value="Dihydro-acid_dehy_C"/>
</dbReference>
<dbReference type="InterPro" id="IPR004404">
    <property type="entry name" value="DihydroxyA_deHydtase"/>
</dbReference>
<dbReference type="InterPro" id="IPR020558">
    <property type="entry name" value="DiOHA_6PGluconate_deHydtase_CS"/>
</dbReference>
<dbReference type="InterPro" id="IPR056740">
    <property type="entry name" value="ILV_EDD_C"/>
</dbReference>
<dbReference type="InterPro" id="IPR000581">
    <property type="entry name" value="ILV_EDD_N"/>
</dbReference>
<dbReference type="InterPro" id="IPR037237">
    <property type="entry name" value="IlvD/EDD_N"/>
</dbReference>
<dbReference type="NCBIfam" id="TIGR00110">
    <property type="entry name" value="ilvD"/>
    <property type="match status" value="1"/>
</dbReference>
<dbReference type="NCBIfam" id="NF002068">
    <property type="entry name" value="PRK00911.1"/>
    <property type="match status" value="1"/>
</dbReference>
<dbReference type="PANTHER" id="PTHR43661">
    <property type="entry name" value="D-XYLONATE DEHYDRATASE"/>
    <property type="match status" value="1"/>
</dbReference>
<dbReference type="PANTHER" id="PTHR43661:SF3">
    <property type="entry name" value="D-XYLONATE DEHYDRATASE YAGF-RELATED"/>
    <property type="match status" value="1"/>
</dbReference>
<dbReference type="Pfam" id="PF24877">
    <property type="entry name" value="ILV_EDD_C"/>
    <property type="match status" value="1"/>
</dbReference>
<dbReference type="Pfam" id="PF00920">
    <property type="entry name" value="ILVD_EDD_N"/>
    <property type="match status" value="1"/>
</dbReference>
<dbReference type="SUPFAM" id="SSF143975">
    <property type="entry name" value="IlvD/EDD N-terminal domain-like"/>
    <property type="match status" value="1"/>
</dbReference>
<dbReference type="SUPFAM" id="SSF52016">
    <property type="entry name" value="LeuD/IlvD-like"/>
    <property type="match status" value="1"/>
</dbReference>
<dbReference type="PROSITE" id="PS00886">
    <property type="entry name" value="ILVD_EDD_1"/>
    <property type="match status" value="1"/>
</dbReference>
<dbReference type="PROSITE" id="PS00887">
    <property type="entry name" value="ILVD_EDD_2"/>
    <property type="match status" value="1"/>
</dbReference>
<accession>Q9UZ03</accession>
<accession>G8ZHG0</accession>
<feature type="chain" id="PRO_0000103547" description="Dihydroxy-acid dehydratase">
    <location>
        <begin position="1"/>
        <end position="551"/>
    </location>
</feature>
<feature type="active site" description="Proton acceptor" evidence="1">
    <location>
        <position position="467"/>
    </location>
</feature>
<feature type="binding site" evidence="1">
    <location>
        <position position="78"/>
    </location>
    <ligand>
        <name>Mg(2+)</name>
        <dbReference type="ChEBI" id="CHEBI:18420"/>
    </ligand>
</feature>
<feature type="binding site" evidence="1">
    <location>
        <position position="119"/>
    </location>
    <ligand>
        <name>[2Fe-2S] cluster</name>
        <dbReference type="ChEBI" id="CHEBI:190135"/>
    </ligand>
</feature>
<feature type="binding site" evidence="1">
    <location>
        <position position="120"/>
    </location>
    <ligand>
        <name>Mg(2+)</name>
        <dbReference type="ChEBI" id="CHEBI:18420"/>
    </ligand>
</feature>
<feature type="binding site" description="via carbamate group" evidence="1">
    <location>
        <position position="121"/>
    </location>
    <ligand>
        <name>Mg(2+)</name>
        <dbReference type="ChEBI" id="CHEBI:18420"/>
    </ligand>
</feature>
<feature type="binding site" evidence="1">
    <location>
        <position position="191"/>
    </location>
    <ligand>
        <name>[2Fe-2S] cluster</name>
        <dbReference type="ChEBI" id="CHEBI:190135"/>
    </ligand>
</feature>
<feature type="binding site" evidence="1">
    <location>
        <position position="441"/>
    </location>
    <ligand>
        <name>Mg(2+)</name>
        <dbReference type="ChEBI" id="CHEBI:18420"/>
    </ligand>
</feature>
<feature type="modified residue" description="N6-carboxylysine" evidence="1">
    <location>
        <position position="121"/>
    </location>
</feature>
<evidence type="ECO:0000255" key="1">
    <source>
        <dbReference type="HAMAP-Rule" id="MF_00012"/>
    </source>
</evidence>
<organism>
    <name type="scientific">Pyrococcus abyssi (strain GE5 / Orsay)</name>
    <dbReference type="NCBI Taxonomy" id="272844"/>
    <lineage>
        <taxon>Archaea</taxon>
        <taxon>Methanobacteriati</taxon>
        <taxon>Methanobacteriota</taxon>
        <taxon>Thermococci</taxon>
        <taxon>Thermococcales</taxon>
        <taxon>Thermococcaceae</taxon>
        <taxon>Pyrococcus</taxon>
    </lineage>
</organism>
<sequence length="551" mass="59286">MRSDVIKKGIERAPHRALFKAMGLTDEELDKPLIGIVNSFNELIPGHIHLRRIAEAVKTGVRMSGGTPLEFSTIGICDGIAMGHGGMKYSLPSRELIADSIEAVVRAYNFDGIVMIASCDKIIPGMLMAMARLDIPAIFISGGPMLPGRFKGEYVDVKTVFEAVGAVKAGKMSEKELKLLEDFACPGCGSCAGMFTANTMNALTEALGISLPWNGTAPAVYAHRIRIAKQTGMQIMKLVEEDLKPSDILTPEAFEDAIAVDMALGGSTNTVLHLMAIAREAGVKLTLDTFDEISEKTPTLVKISPAGKHFVLDLYEAGGVLAIMKRLSELGLIHEDRITVSLKTVGELLRDVSVLRDDVIRPVTRPYLSRGGLMILYGSLAPKGAVLKVSAIPDIETFEGEARVFDCEEDAVKAILSGDIEKGDVVVIRYEGPKGGPGMREMLAPTSAIAGMGLDRDVALVTDGRFSGATRGLSIGHVSPEAAEGGPIALVEDGDLIRIDVKAKRIDLLVDEEELKERKAKWKPKVKEVKGYLKRYSSLVTSANTGAVFRE</sequence>
<gene>
    <name evidence="1" type="primary">ilvD</name>
    <name type="ordered locus">PYRAB13540</name>
    <name type="ORF">PAB0895</name>
</gene>
<keyword id="KW-0001">2Fe-2S</keyword>
<keyword id="KW-0028">Amino-acid biosynthesis</keyword>
<keyword id="KW-0100">Branched-chain amino acid biosynthesis</keyword>
<keyword id="KW-0408">Iron</keyword>
<keyword id="KW-0411">Iron-sulfur</keyword>
<keyword id="KW-0456">Lyase</keyword>
<keyword id="KW-0460">Magnesium</keyword>
<keyword id="KW-0479">Metal-binding</keyword>
<reference key="1">
    <citation type="journal article" date="2003" name="Mol. Microbiol.">
        <title>An integrated analysis of the genome of the hyperthermophilic archaeon Pyrococcus abyssi.</title>
        <authorList>
            <person name="Cohen G.N."/>
            <person name="Barbe V."/>
            <person name="Flament D."/>
            <person name="Galperin M."/>
            <person name="Heilig R."/>
            <person name="Lecompte O."/>
            <person name="Poch O."/>
            <person name="Prieur D."/>
            <person name="Querellou J."/>
            <person name="Ripp R."/>
            <person name="Thierry J.-C."/>
            <person name="Van der Oost J."/>
            <person name="Weissenbach J."/>
            <person name="Zivanovic Y."/>
            <person name="Forterre P."/>
        </authorList>
    </citation>
    <scope>NUCLEOTIDE SEQUENCE [LARGE SCALE GENOMIC DNA]</scope>
    <source>
        <strain>GE5 / Orsay</strain>
    </source>
</reference>
<reference key="2">
    <citation type="journal article" date="2012" name="Curr. Microbiol.">
        <title>Re-annotation of two hyperthermophilic archaea Pyrococcus abyssi GE5 and Pyrococcus furiosus DSM 3638.</title>
        <authorList>
            <person name="Gao J."/>
            <person name="Wang J."/>
        </authorList>
    </citation>
    <scope>GENOME REANNOTATION</scope>
    <source>
        <strain>GE5 / Orsay</strain>
    </source>
</reference>
<proteinExistence type="inferred from homology"/>